<protein>
    <recommendedName>
        <fullName evidence="1">Antitermination protein Q</fullName>
    </recommendedName>
</protein>
<feature type="chain" id="PRO_0000073894" description="Antitermination protein Q">
    <location>
        <begin position="1"/>
        <end position="207"/>
    </location>
</feature>
<feature type="zinc finger region" evidence="1">
    <location>
        <begin position="118"/>
        <end position="147"/>
    </location>
</feature>
<feature type="DNA-binding region" evidence="1">
    <location>
        <begin position="171"/>
        <end position="192"/>
    </location>
</feature>
<feature type="region of interest" description="Disordered" evidence="2">
    <location>
        <begin position="1"/>
        <end position="28"/>
    </location>
</feature>
<feature type="binding site" evidence="1">
    <location>
        <position position="118"/>
    </location>
    <ligand>
        <name>Zn(2+)</name>
        <dbReference type="ChEBI" id="CHEBI:29105"/>
    </ligand>
</feature>
<feature type="binding site" evidence="1">
    <location>
        <position position="121"/>
    </location>
    <ligand>
        <name>Zn(2+)</name>
        <dbReference type="ChEBI" id="CHEBI:29105"/>
    </ligand>
</feature>
<feature type="binding site" evidence="1">
    <location>
        <position position="144"/>
    </location>
    <ligand>
        <name>Zn(2+)</name>
        <dbReference type="ChEBI" id="CHEBI:29105"/>
    </ligand>
</feature>
<feature type="binding site" evidence="1">
    <location>
        <position position="147"/>
    </location>
    <ligand>
        <name>Zn(2+)</name>
        <dbReference type="ChEBI" id="CHEBI:29105"/>
    </ligand>
</feature>
<feature type="site" description="Interaction with host rpoB" evidence="1">
    <location>
        <position position="101"/>
    </location>
</feature>
<feature type="site" description="Interaction with host RNA polymerase sigma factor RPOD" evidence="1">
    <location>
        <position position="134"/>
    </location>
</feature>
<feature type="site" description="Interaction with host rpoB" evidence="1">
    <location>
        <position position="160"/>
    </location>
</feature>
<feature type="site" description="Interaction with host rpoB" evidence="1">
    <location>
        <position position="165"/>
    </location>
</feature>
<comment type="function">
    <text evidence="1">Mediates the switch from middle to viral late gene expression by associating with host RNA polymerase (RNAP) so that the latter can read without pausing and through transcription terminators preceding late genes. Competes with host factor sigma 70 for binding to RPOB, the beta-subunit of host RNAP. To join the elongation complex, binds a specific DNA Q-binding element (QBE) and interacts with RNAP that is paused during early elongation. Participates in the lysis-lysogeny decision by activating the expression of the late lytic genes.</text>
</comment>
<comment type="subunit">
    <text evidence="1">Interacts with host RPOB (via flap domain); this interaction renders host RNAP resistant to transcription pausing and allows it to read through termination signals. Interacts with host RNA polymerase sigma factor RPOD (via domain-4). Interacts with host NusA (via N-terminus and AR2 domain); this interaction releases the autoinhibition of NusA.</text>
</comment>
<comment type="similarity">
    <text evidence="1">Belongs to the phage antitermination Q type 2 family.</text>
</comment>
<proteinExistence type="inferred from homology"/>
<reference key="1">
    <citation type="submission" date="1998-09" db="EMBL/GenBank/DDBJ databases">
        <title>Lysis gene modules in the phage P22 gene pool.</title>
        <authorList>
            <person name="Zimmer A."/>
            <person name="Schmieger H."/>
        </authorList>
    </citation>
    <scope>NUCLEOTIDE SEQUENCE [GENOMIC DNA]</scope>
</reference>
<dbReference type="EMBL" id="AJ011580">
    <property type="protein sequence ID" value="CAA09704.1"/>
    <property type="molecule type" value="Genomic_DNA"/>
</dbReference>
<dbReference type="SMR" id="O80286"/>
<dbReference type="GO" id="GO:0003677">
    <property type="term" value="F:DNA binding"/>
    <property type="evidence" value="ECO:0007669"/>
    <property type="project" value="UniProtKB-UniRule"/>
</dbReference>
<dbReference type="GO" id="GO:0008270">
    <property type="term" value="F:zinc ion binding"/>
    <property type="evidence" value="ECO:0007669"/>
    <property type="project" value="UniProtKB-UniRule"/>
</dbReference>
<dbReference type="GO" id="GO:0006353">
    <property type="term" value="P:DNA-templated transcription termination"/>
    <property type="evidence" value="ECO:0007669"/>
    <property type="project" value="UniProtKB-UniRule"/>
</dbReference>
<dbReference type="GO" id="GO:0031564">
    <property type="term" value="P:transcription antitermination"/>
    <property type="evidence" value="ECO:0007669"/>
    <property type="project" value="UniProtKB-UniRule"/>
</dbReference>
<dbReference type="Gene3D" id="1.10.274.110">
    <property type="match status" value="1"/>
</dbReference>
<dbReference type="HAMAP" id="MF_04158">
    <property type="entry name" value="Antitermination_lambda"/>
    <property type="match status" value="1"/>
</dbReference>
<dbReference type="InterPro" id="IPR038500">
    <property type="entry name" value="Antitermination_sf"/>
</dbReference>
<dbReference type="InterPro" id="IPR003222">
    <property type="entry name" value="Antitermntn"/>
</dbReference>
<dbReference type="Pfam" id="PF03589">
    <property type="entry name" value="Antiterm"/>
    <property type="match status" value="2"/>
</dbReference>
<accession>O80286</accession>
<sequence length="207" mass="22434">MRLESVAKFHSPKSPMMSDSPRATASDSLSGTDVMAAMGMAQSQAGFGMAAFCGKHELSQNDKQKAINYLMQFAHKVSGKYCGVAKLEGNTKAKVLQVLATFAYADYCRSAATPGARCRNCHGTGRAVDIAKTEQWGRVVEKECGRCKGVGYSRMPASAAYRAVTMLIPNLTQPTWSRTVKPLYDALVVQCHKEESIADNILNAVTR</sequence>
<name>REGQ_BPPS3</name>
<gene>
    <name type="primary">23</name>
</gene>
<organismHost>
    <name type="scientific">Salmonella typhimurium</name>
    <dbReference type="NCBI Taxonomy" id="90371"/>
</organismHost>
<organism>
    <name type="scientific">Bacteriophage PS34</name>
    <dbReference type="NCBI Taxonomy" id="83127"/>
    <lineage>
        <taxon>Viruses</taxon>
        <taxon>Duplodnaviria</taxon>
        <taxon>Heunggongvirae</taxon>
        <taxon>Uroviricota</taxon>
        <taxon>Caudoviricetes</taxon>
    </lineage>
</organism>
<evidence type="ECO:0000255" key="1">
    <source>
        <dbReference type="HAMAP-Rule" id="MF_04158"/>
    </source>
</evidence>
<evidence type="ECO:0000256" key="2">
    <source>
        <dbReference type="SAM" id="MobiDB-lite"/>
    </source>
</evidence>
<keyword id="KW-0238">DNA-binding</keyword>
<keyword id="KW-0945">Host-virus interaction</keyword>
<keyword id="KW-0479">Metal-binding</keyword>
<keyword id="KW-0804">Transcription</keyword>
<keyword id="KW-0805">Transcription regulation</keyword>
<keyword id="KW-0806">Transcription termination</keyword>
<keyword id="KW-0862">Zinc</keyword>
<keyword id="KW-0863">Zinc-finger</keyword>